<proteinExistence type="evidence at transcript level"/>
<comment type="function">
    <text evidence="1">E3 ubiquitin ligase catalyzing the covalent attachment of ubiquitin moieties onto substrate proteins.</text>
</comment>
<comment type="catalytic activity">
    <reaction>
        <text>S-ubiquitinyl-[E2 ubiquitin-conjugating enzyme]-L-cysteine + [acceptor protein]-L-lysine = [E2 ubiquitin-conjugating enzyme]-L-cysteine + N(6)-ubiquitinyl-[acceptor protein]-L-lysine.</text>
        <dbReference type="EC" id="2.3.2.27"/>
    </reaction>
</comment>
<comment type="pathway">
    <text>Protein modification; protein ubiquitination.</text>
</comment>
<comment type="sequence caution" evidence="6">
    <conflict type="miscellaneous discrepancy">
        <sequence resource="EMBL-CDS" id="AAG27598"/>
    </conflict>
    <text>Possible contaminating sequence. The N-terminal 7 residues do not match the underlying genomic sequence.</text>
</comment>
<gene>
    <name evidence="10" type="primary">mkrn1</name>
    <name type="ORF">si:ch211-9f20.3</name>
    <name type="ORF">zgc:110403</name>
</gene>
<name>MKRN1_DANRE</name>
<protein>
    <recommendedName>
        <fullName>Probable E3 ubiquitin-protein ligase makorin-1</fullName>
        <ecNumber>2.3.2.27</ecNumber>
    </recommendedName>
    <alternativeName>
        <fullName evidence="6">RING-type E3 ubiquitin transferase makorin-1</fullName>
    </alternativeName>
</protein>
<keyword id="KW-0479">Metal-binding</keyword>
<keyword id="KW-1185">Reference proteome</keyword>
<keyword id="KW-0677">Repeat</keyword>
<keyword id="KW-0808">Transferase</keyword>
<keyword id="KW-0833">Ubl conjugation pathway</keyword>
<keyword id="KW-0862">Zinc</keyword>
<keyword id="KW-0863">Zinc-finger</keyword>
<evidence type="ECO:0000250" key="1"/>
<evidence type="ECO:0000255" key="2"/>
<evidence type="ECO:0000255" key="3">
    <source>
        <dbReference type="PROSITE-ProRule" id="PRU00175"/>
    </source>
</evidence>
<evidence type="ECO:0000255" key="4">
    <source>
        <dbReference type="PROSITE-ProRule" id="PRU00723"/>
    </source>
</evidence>
<evidence type="ECO:0000256" key="5">
    <source>
        <dbReference type="SAM" id="MobiDB-lite"/>
    </source>
</evidence>
<evidence type="ECO:0000305" key="6"/>
<evidence type="ECO:0000312" key="7">
    <source>
        <dbReference type="EMBL" id="AAG27598.1"/>
    </source>
</evidence>
<evidence type="ECO:0000312" key="8">
    <source>
        <dbReference type="EMBL" id="AAH95243.1"/>
    </source>
</evidence>
<evidence type="ECO:0000312" key="9">
    <source>
        <dbReference type="EMBL" id="CAK05024.2"/>
    </source>
</evidence>
<evidence type="ECO:0000312" key="10">
    <source>
        <dbReference type="ZFIN" id="ZDB-GENE-020213-1"/>
    </source>
</evidence>
<organism>
    <name type="scientific">Danio rerio</name>
    <name type="common">Zebrafish</name>
    <name type="synonym">Brachydanio rerio</name>
    <dbReference type="NCBI Taxonomy" id="7955"/>
    <lineage>
        <taxon>Eukaryota</taxon>
        <taxon>Metazoa</taxon>
        <taxon>Chordata</taxon>
        <taxon>Craniata</taxon>
        <taxon>Vertebrata</taxon>
        <taxon>Euteleostomi</taxon>
        <taxon>Actinopterygii</taxon>
        <taxon>Neopterygii</taxon>
        <taxon>Teleostei</taxon>
        <taxon>Ostariophysi</taxon>
        <taxon>Cypriniformes</taxon>
        <taxon>Danionidae</taxon>
        <taxon>Danioninae</taxon>
        <taxon>Danio</taxon>
    </lineage>
</organism>
<dbReference type="EC" id="2.3.2.27"/>
<dbReference type="EMBL" id="CR792454">
    <property type="protein sequence ID" value="CAK05024.2"/>
    <property type="molecule type" value="Genomic_DNA"/>
</dbReference>
<dbReference type="EMBL" id="CT826375">
    <property type="protein sequence ID" value="CAK05024.2"/>
    <property type="status" value="JOINED"/>
    <property type="molecule type" value="Genomic_DNA"/>
</dbReference>
<dbReference type="EMBL" id="BC095243">
    <property type="protein sequence ID" value="AAH95243.1"/>
    <property type="molecule type" value="mRNA"/>
</dbReference>
<dbReference type="EMBL" id="AF277173">
    <property type="protein sequence ID" value="AAG27598.1"/>
    <property type="status" value="ALT_SEQ"/>
    <property type="molecule type" value="mRNA"/>
</dbReference>
<dbReference type="RefSeq" id="NP_694510.1">
    <property type="nucleotide sequence ID" value="NM_152978.1"/>
</dbReference>
<dbReference type="FunCoup" id="Q4VBT5">
    <property type="interactions" value="430"/>
</dbReference>
<dbReference type="STRING" id="7955.ENSDARP00000061069"/>
<dbReference type="PaxDb" id="7955-ENSDARP00000061069"/>
<dbReference type="Ensembl" id="ENSDART00000061070">
    <property type="protein sequence ID" value="ENSDARP00000061069"/>
    <property type="gene ID" value="ENSDARG00000041665"/>
</dbReference>
<dbReference type="GeneID" id="170782"/>
<dbReference type="KEGG" id="dre:170782"/>
<dbReference type="AGR" id="ZFIN:ZDB-GENE-020213-1"/>
<dbReference type="CTD" id="23608"/>
<dbReference type="ZFIN" id="ZDB-GENE-020213-1">
    <property type="gene designation" value="mkrn1"/>
</dbReference>
<dbReference type="eggNOG" id="KOG1039">
    <property type="taxonomic scope" value="Eukaryota"/>
</dbReference>
<dbReference type="HOGENOM" id="CLU_040815_4_1_1"/>
<dbReference type="InParanoid" id="Q4VBT5"/>
<dbReference type="OMA" id="QQTNVEM"/>
<dbReference type="OrthoDB" id="411372at2759"/>
<dbReference type="PhylomeDB" id="Q4VBT5"/>
<dbReference type="TreeFam" id="TF315108"/>
<dbReference type="Reactome" id="R-DRE-198323">
    <property type="pathway name" value="AKT phosphorylates targets in the cytosol"/>
</dbReference>
<dbReference type="Reactome" id="R-DRE-8948751">
    <property type="pathway name" value="Regulation of PTEN stability and activity"/>
</dbReference>
<dbReference type="Reactome" id="R-DRE-983168">
    <property type="pathway name" value="Antigen processing: Ubiquitination &amp; Proteasome degradation"/>
</dbReference>
<dbReference type="UniPathway" id="UPA00143"/>
<dbReference type="PRO" id="PR:Q4VBT5"/>
<dbReference type="Proteomes" id="UP000000437">
    <property type="component" value="Chromosome 4"/>
</dbReference>
<dbReference type="Bgee" id="ENSDARG00000041665">
    <property type="expression patterns" value="Expressed in muscle tissue and 25 other cell types or tissues"/>
</dbReference>
<dbReference type="ExpressionAtlas" id="Q4VBT5">
    <property type="expression patterns" value="baseline and differential"/>
</dbReference>
<dbReference type="GO" id="GO:0061630">
    <property type="term" value="F:ubiquitin protein ligase activity"/>
    <property type="evidence" value="ECO:0000318"/>
    <property type="project" value="GO_Central"/>
</dbReference>
<dbReference type="GO" id="GO:0008270">
    <property type="term" value="F:zinc ion binding"/>
    <property type="evidence" value="ECO:0007669"/>
    <property type="project" value="UniProtKB-KW"/>
</dbReference>
<dbReference type="GO" id="GO:0000209">
    <property type="term" value="P:protein polyubiquitination"/>
    <property type="evidence" value="ECO:0007669"/>
    <property type="project" value="InterPro"/>
</dbReference>
<dbReference type="GO" id="GO:0016567">
    <property type="term" value="P:protein ubiquitination"/>
    <property type="evidence" value="ECO:0000318"/>
    <property type="project" value="GO_Central"/>
</dbReference>
<dbReference type="CDD" id="cd16730">
    <property type="entry name" value="RING-HC_MKRN1_3"/>
    <property type="match status" value="1"/>
</dbReference>
<dbReference type="FunFam" id="3.30.40.10:FF:000117">
    <property type="entry name" value="Probable E3 ubiquitin-protein ligase makorin-1"/>
    <property type="match status" value="1"/>
</dbReference>
<dbReference type="Gene3D" id="4.10.1000.10">
    <property type="entry name" value="Zinc finger, CCCH-type"/>
    <property type="match status" value="1"/>
</dbReference>
<dbReference type="Gene3D" id="3.30.40.10">
    <property type="entry name" value="Zinc/RING finger domain, C3HC4 (zinc finger)"/>
    <property type="match status" value="1"/>
</dbReference>
<dbReference type="InterPro" id="IPR045072">
    <property type="entry name" value="MKRN-like"/>
</dbReference>
<dbReference type="InterPro" id="IPR031644">
    <property type="entry name" value="MKRN1_C"/>
</dbReference>
<dbReference type="InterPro" id="IPR041367">
    <property type="entry name" value="Znf-CCCH_4"/>
</dbReference>
<dbReference type="InterPro" id="IPR000571">
    <property type="entry name" value="Znf_CCCH"/>
</dbReference>
<dbReference type="InterPro" id="IPR036855">
    <property type="entry name" value="Znf_CCCH_sf"/>
</dbReference>
<dbReference type="InterPro" id="IPR001841">
    <property type="entry name" value="Znf_RING"/>
</dbReference>
<dbReference type="InterPro" id="IPR013083">
    <property type="entry name" value="Znf_RING/FYVE/PHD"/>
</dbReference>
<dbReference type="InterPro" id="IPR017907">
    <property type="entry name" value="Znf_RING_CS"/>
</dbReference>
<dbReference type="PANTHER" id="PTHR11224:SF37">
    <property type="entry name" value="E3 UBIQUITIN-PROTEIN LIGASE MAKORIN-1"/>
    <property type="match status" value="1"/>
</dbReference>
<dbReference type="PANTHER" id="PTHR11224">
    <property type="entry name" value="MAKORIN-RELATED"/>
    <property type="match status" value="1"/>
</dbReference>
<dbReference type="Pfam" id="PF15815">
    <property type="entry name" value="MKRN1_C"/>
    <property type="match status" value="1"/>
</dbReference>
<dbReference type="Pfam" id="PF14608">
    <property type="entry name" value="zf-CCCH_2"/>
    <property type="match status" value="1"/>
</dbReference>
<dbReference type="Pfam" id="PF18044">
    <property type="entry name" value="zf-CCCH_4"/>
    <property type="match status" value="3"/>
</dbReference>
<dbReference type="SMART" id="SM00184">
    <property type="entry name" value="RING"/>
    <property type="match status" value="1"/>
</dbReference>
<dbReference type="SMART" id="SM00356">
    <property type="entry name" value="ZnF_C3H1"/>
    <property type="match status" value="4"/>
</dbReference>
<dbReference type="SUPFAM" id="SSF90229">
    <property type="entry name" value="CCCH zinc finger"/>
    <property type="match status" value="2"/>
</dbReference>
<dbReference type="SUPFAM" id="SSF57850">
    <property type="entry name" value="RING/U-box"/>
    <property type="match status" value="1"/>
</dbReference>
<dbReference type="PROSITE" id="PS50103">
    <property type="entry name" value="ZF_C3H1"/>
    <property type="match status" value="4"/>
</dbReference>
<dbReference type="PROSITE" id="PS00518">
    <property type="entry name" value="ZF_RING_1"/>
    <property type="match status" value="1"/>
</dbReference>
<dbReference type="PROSITE" id="PS50089">
    <property type="entry name" value="ZF_RING_2"/>
    <property type="match status" value="1"/>
</dbReference>
<feature type="chain" id="PRO_0000361045" description="Probable E3 ubiquitin-protein ligase makorin-1">
    <location>
        <begin position="1"/>
        <end position="439"/>
    </location>
</feature>
<feature type="zinc finger region" description="C3H1-type 1" evidence="4">
    <location>
        <begin position="18"/>
        <end position="45"/>
    </location>
</feature>
<feature type="zinc finger region" description="C3H1-type 2" evidence="4">
    <location>
        <begin position="48"/>
        <end position="74"/>
    </location>
</feature>
<feature type="zinc finger region" description="C3H1-type 3" evidence="4">
    <location>
        <begin position="163"/>
        <end position="190"/>
    </location>
</feature>
<feature type="zinc finger region" description="RING-type" evidence="3">
    <location>
        <begin position="236"/>
        <end position="290"/>
    </location>
</feature>
<feature type="zinc finger region" description="C3H1-type 4" evidence="4">
    <location>
        <begin position="319"/>
        <end position="348"/>
    </location>
</feature>
<feature type="region of interest" description="Disordered" evidence="5">
    <location>
        <begin position="73"/>
        <end position="118"/>
    </location>
</feature>
<feature type="region of interest" description="Makorin-type Cys-His" evidence="2">
    <location>
        <begin position="191"/>
        <end position="218"/>
    </location>
</feature>
<feature type="region of interest" description="Disordered" evidence="5">
    <location>
        <begin position="352"/>
        <end position="371"/>
    </location>
</feature>
<feature type="compositionally biased region" description="Low complexity" evidence="5">
    <location>
        <begin position="358"/>
        <end position="368"/>
    </location>
</feature>
<feature type="sequence conflict" description="In Ref. 3; AAG27598." evidence="6" ref="3">
    <original>F</original>
    <variation>L</variation>
    <location>
        <position position="295"/>
    </location>
</feature>
<accession>Q4VBT5</accession>
<accession>Q1L8F6</accession>
<accession>Q9DFG7</accession>
<sequence>MAEAAAASTAAPAVIGGWTKHVTCRYFMHGLCKEGENCRYSHDLSSCKQTMICKFFQKGCCAFGDRCRYEHTKPSKQDEVPSSKPSMPLTAAPLAGTPEPVSDGPGGTTGAQEKPQGSGAVDWVNAAEFVPGQPYCGRADPVLCEGPGPLIEEEYEKEQANKEMKKQLCPYAAVGECRYGLNCAYLHGDVCDMCGLQVLHPSDTSQRSQHIRACIEAHEKDMEISFAIQRSKDMMCGVCMEVVFEKTNPSERRFGILSNCCHCYCLKCIRKWRSAKQFESKIIKSCPECRITSNFVIPSEYWVEDKEEKQQLIQKYKDGMGTKPCRYFDEGRGTCPFGANCFYKHAFPDGRLEEPQPQRRQNGSNGRNRNTRRTHLWDLLDERENSDSFDNEDEEMVRFELSEMLLMLLAAGTDDDVTDSEDEWDLFHEELDDYYELYL</sequence>
<reference key="1">
    <citation type="journal article" date="2013" name="Nature">
        <title>The zebrafish reference genome sequence and its relationship to the human genome.</title>
        <authorList>
            <person name="Howe K."/>
            <person name="Clark M.D."/>
            <person name="Torroja C.F."/>
            <person name="Torrance J."/>
            <person name="Berthelot C."/>
            <person name="Muffato M."/>
            <person name="Collins J.E."/>
            <person name="Humphray S."/>
            <person name="McLaren K."/>
            <person name="Matthews L."/>
            <person name="McLaren S."/>
            <person name="Sealy I."/>
            <person name="Caccamo M."/>
            <person name="Churcher C."/>
            <person name="Scott C."/>
            <person name="Barrett J.C."/>
            <person name="Koch R."/>
            <person name="Rauch G.J."/>
            <person name="White S."/>
            <person name="Chow W."/>
            <person name="Kilian B."/>
            <person name="Quintais L.T."/>
            <person name="Guerra-Assuncao J.A."/>
            <person name="Zhou Y."/>
            <person name="Gu Y."/>
            <person name="Yen J."/>
            <person name="Vogel J.H."/>
            <person name="Eyre T."/>
            <person name="Redmond S."/>
            <person name="Banerjee R."/>
            <person name="Chi J."/>
            <person name="Fu B."/>
            <person name="Langley E."/>
            <person name="Maguire S.F."/>
            <person name="Laird G.K."/>
            <person name="Lloyd D."/>
            <person name="Kenyon E."/>
            <person name="Donaldson S."/>
            <person name="Sehra H."/>
            <person name="Almeida-King J."/>
            <person name="Loveland J."/>
            <person name="Trevanion S."/>
            <person name="Jones M."/>
            <person name="Quail M."/>
            <person name="Willey D."/>
            <person name="Hunt A."/>
            <person name="Burton J."/>
            <person name="Sims S."/>
            <person name="McLay K."/>
            <person name="Plumb B."/>
            <person name="Davis J."/>
            <person name="Clee C."/>
            <person name="Oliver K."/>
            <person name="Clark R."/>
            <person name="Riddle C."/>
            <person name="Elliot D."/>
            <person name="Threadgold G."/>
            <person name="Harden G."/>
            <person name="Ware D."/>
            <person name="Begum S."/>
            <person name="Mortimore B."/>
            <person name="Kerry G."/>
            <person name="Heath P."/>
            <person name="Phillimore B."/>
            <person name="Tracey A."/>
            <person name="Corby N."/>
            <person name="Dunn M."/>
            <person name="Johnson C."/>
            <person name="Wood J."/>
            <person name="Clark S."/>
            <person name="Pelan S."/>
            <person name="Griffiths G."/>
            <person name="Smith M."/>
            <person name="Glithero R."/>
            <person name="Howden P."/>
            <person name="Barker N."/>
            <person name="Lloyd C."/>
            <person name="Stevens C."/>
            <person name="Harley J."/>
            <person name="Holt K."/>
            <person name="Panagiotidis G."/>
            <person name="Lovell J."/>
            <person name="Beasley H."/>
            <person name="Henderson C."/>
            <person name="Gordon D."/>
            <person name="Auger K."/>
            <person name="Wright D."/>
            <person name="Collins J."/>
            <person name="Raisen C."/>
            <person name="Dyer L."/>
            <person name="Leung K."/>
            <person name="Robertson L."/>
            <person name="Ambridge K."/>
            <person name="Leongamornlert D."/>
            <person name="McGuire S."/>
            <person name="Gilderthorp R."/>
            <person name="Griffiths C."/>
            <person name="Manthravadi D."/>
            <person name="Nichol S."/>
            <person name="Barker G."/>
            <person name="Whitehead S."/>
            <person name="Kay M."/>
            <person name="Brown J."/>
            <person name="Murnane C."/>
            <person name="Gray E."/>
            <person name="Humphries M."/>
            <person name="Sycamore N."/>
            <person name="Barker D."/>
            <person name="Saunders D."/>
            <person name="Wallis J."/>
            <person name="Babbage A."/>
            <person name="Hammond S."/>
            <person name="Mashreghi-Mohammadi M."/>
            <person name="Barr L."/>
            <person name="Martin S."/>
            <person name="Wray P."/>
            <person name="Ellington A."/>
            <person name="Matthews N."/>
            <person name="Ellwood M."/>
            <person name="Woodmansey R."/>
            <person name="Clark G."/>
            <person name="Cooper J."/>
            <person name="Tromans A."/>
            <person name="Grafham D."/>
            <person name="Skuce C."/>
            <person name="Pandian R."/>
            <person name="Andrews R."/>
            <person name="Harrison E."/>
            <person name="Kimberley A."/>
            <person name="Garnett J."/>
            <person name="Fosker N."/>
            <person name="Hall R."/>
            <person name="Garner P."/>
            <person name="Kelly D."/>
            <person name="Bird C."/>
            <person name="Palmer S."/>
            <person name="Gehring I."/>
            <person name="Berger A."/>
            <person name="Dooley C.M."/>
            <person name="Ersan-Urun Z."/>
            <person name="Eser C."/>
            <person name="Geiger H."/>
            <person name="Geisler M."/>
            <person name="Karotki L."/>
            <person name="Kirn A."/>
            <person name="Konantz J."/>
            <person name="Konantz M."/>
            <person name="Oberlander M."/>
            <person name="Rudolph-Geiger S."/>
            <person name="Teucke M."/>
            <person name="Lanz C."/>
            <person name="Raddatz G."/>
            <person name="Osoegawa K."/>
            <person name="Zhu B."/>
            <person name="Rapp A."/>
            <person name="Widaa S."/>
            <person name="Langford C."/>
            <person name="Yang F."/>
            <person name="Schuster S.C."/>
            <person name="Carter N.P."/>
            <person name="Harrow J."/>
            <person name="Ning Z."/>
            <person name="Herrero J."/>
            <person name="Searle S.M."/>
            <person name="Enright A."/>
            <person name="Geisler R."/>
            <person name="Plasterk R.H."/>
            <person name="Lee C."/>
            <person name="Westerfield M."/>
            <person name="de Jong P.J."/>
            <person name="Zon L.I."/>
            <person name="Postlethwait J.H."/>
            <person name="Nusslein-Volhard C."/>
            <person name="Hubbard T.J."/>
            <person name="Roest Crollius H."/>
            <person name="Rogers J."/>
            <person name="Stemple D.L."/>
        </authorList>
    </citation>
    <scope>NUCLEOTIDE SEQUENCE [LARGE SCALE GENOMIC DNA]</scope>
    <source>
        <strain>Tuebingen</strain>
    </source>
</reference>
<reference evidence="9" key="2">
    <citation type="submission" date="2005-05" db="EMBL/GenBank/DDBJ databases">
        <authorList>
            <consortium name="NIH - Zebrafish Gene Collection (ZGC) project"/>
        </authorList>
    </citation>
    <scope>NUCLEOTIDE SEQUENCE [LARGE SCALE MRNA]</scope>
    <source>
        <tissue evidence="8">Larval eye</tissue>
    </source>
</reference>
<reference evidence="6 7" key="3">
    <citation type="journal article" date="2001" name="Genomics">
        <title>Phylogenetic conservation of the makorin-2 gene, encoding a multiple zinc-finger protein, antisense to the raf1 proto-oncogene.</title>
        <authorList>
            <person name="Gray T.A."/>
            <person name="Azama K."/>
            <person name="Whitmore K."/>
            <person name="Min A."/>
            <person name="Abe S."/>
            <person name="Nicholls R.D."/>
        </authorList>
    </citation>
    <scope>NUCLEOTIDE SEQUENCE [MRNA] OF 5-439</scope>
</reference>